<protein>
    <recommendedName>
        <fullName evidence="1">Uridylate kinase</fullName>
        <shortName evidence="1">UK</shortName>
        <ecNumber evidence="1">2.7.4.22</ecNumber>
    </recommendedName>
    <alternativeName>
        <fullName evidence="1">Uridine monophosphate kinase</fullName>
        <shortName evidence="1">UMP kinase</shortName>
        <shortName evidence="1">UMPK</shortName>
    </alternativeName>
</protein>
<feature type="chain" id="PRO_1000053893" description="Uridylate kinase">
    <location>
        <begin position="1"/>
        <end position="236"/>
    </location>
</feature>
<feature type="binding site" evidence="1">
    <location>
        <begin position="10"/>
        <end position="13"/>
    </location>
    <ligand>
        <name>ATP</name>
        <dbReference type="ChEBI" id="CHEBI:30616"/>
    </ligand>
</feature>
<feature type="binding site" evidence="1">
    <location>
        <position position="52"/>
    </location>
    <ligand>
        <name>UMP</name>
        <dbReference type="ChEBI" id="CHEBI:57865"/>
    </ligand>
</feature>
<feature type="binding site" evidence="1">
    <location>
        <position position="53"/>
    </location>
    <ligand>
        <name>ATP</name>
        <dbReference type="ChEBI" id="CHEBI:30616"/>
    </ligand>
</feature>
<feature type="binding site" evidence="1">
    <location>
        <position position="57"/>
    </location>
    <ligand>
        <name>ATP</name>
        <dbReference type="ChEBI" id="CHEBI:30616"/>
    </ligand>
</feature>
<feature type="binding site" evidence="1">
    <location>
        <position position="72"/>
    </location>
    <ligand>
        <name>UMP</name>
        <dbReference type="ChEBI" id="CHEBI:57865"/>
    </ligand>
</feature>
<feature type="binding site" evidence="1">
    <location>
        <begin position="133"/>
        <end position="140"/>
    </location>
    <ligand>
        <name>UMP</name>
        <dbReference type="ChEBI" id="CHEBI:57865"/>
    </ligand>
</feature>
<feature type="binding site" evidence="1">
    <location>
        <position position="160"/>
    </location>
    <ligand>
        <name>ATP</name>
        <dbReference type="ChEBI" id="CHEBI:30616"/>
    </ligand>
</feature>
<feature type="binding site" evidence="1">
    <location>
        <position position="166"/>
    </location>
    <ligand>
        <name>ATP</name>
        <dbReference type="ChEBI" id="CHEBI:30616"/>
    </ligand>
</feature>
<feature type="binding site" evidence="1">
    <location>
        <position position="169"/>
    </location>
    <ligand>
        <name>ATP</name>
        <dbReference type="ChEBI" id="CHEBI:30616"/>
    </ligand>
</feature>
<evidence type="ECO:0000255" key="1">
    <source>
        <dbReference type="HAMAP-Rule" id="MF_01220"/>
    </source>
</evidence>
<reference key="1">
    <citation type="journal article" date="2007" name="PLoS Biol.">
        <title>Evolution of symbiotic bacteria in the distal human intestine.</title>
        <authorList>
            <person name="Xu J."/>
            <person name="Mahowald M.A."/>
            <person name="Ley R.E."/>
            <person name="Lozupone C.A."/>
            <person name="Hamady M."/>
            <person name="Martens E.C."/>
            <person name="Henrissat B."/>
            <person name="Coutinho P.M."/>
            <person name="Minx P."/>
            <person name="Latreille P."/>
            <person name="Cordum H."/>
            <person name="Van Brunt A."/>
            <person name="Kim K."/>
            <person name="Fulton R.S."/>
            <person name="Fulton L.A."/>
            <person name="Clifton S.W."/>
            <person name="Wilson R.K."/>
            <person name="Knight R.D."/>
            <person name="Gordon J.I."/>
        </authorList>
    </citation>
    <scope>NUCLEOTIDE SEQUENCE [LARGE SCALE GENOMIC DNA]</scope>
    <source>
        <strain>ATCC 8482 / DSM 1447 / JCM 5826 / CCUG 4940 / NBRC 14291 / NCTC 11154</strain>
    </source>
</reference>
<organism>
    <name type="scientific">Phocaeicola vulgatus (strain ATCC 8482 / DSM 1447 / JCM 5826 / CCUG 4940 / NBRC 14291 / NCTC 11154)</name>
    <name type="common">Bacteroides vulgatus</name>
    <dbReference type="NCBI Taxonomy" id="435590"/>
    <lineage>
        <taxon>Bacteria</taxon>
        <taxon>Pseudomonadati</taxon>
        <taxon>Bacteroidota</taxon>
        <taxon>Bacteroidia</taxon>
        <taxon>Bacteroidales</taxon>
        <taxon>Bacteroidaceae</taxon>
        <taxon>Phocaeicola</taxon>
    </lineage>
</organism>
<gene>
    <name evidence="1" type="primary">pyrH</name>
    <name type="ordered locus">BVU_1873</name>
</gene>
<sequence>MARFKRILLKLSGESLMGEKQYGIDEKRLGEYAQQIKEIHDLGVQIGIVIGGGNIFRGLSGASKGFDRVKGDQMGMLATVINSLGLSSALGAAGVKARVLTAIRMEPIGEFYNKWKAIEAMENGEVVIMSAGTGNPFFTTDTGSSLRGIEIEADVMLKGTRVDGIYTADPEKDPTATKFDDITYDEVLKRGLKVMDLTATCMCKENNLPIIVFDMDTVGNLKKVMTGENIGTLVHN</sequence>
<accession>A6L1I4</accession>
<comment type="function">
    <text evidence="1">Catalyzes the reversible phosphorylation of UMP to UDP.</text>
</comment>
<comment type="catalytic activity">
    <reaction evidence="1">
        <text>UMP + ATP = UDP + ADP</text>
        <dbReference type="Rhea" id="RHEA:24400"/>
        <dbReference type="ChEBI" id="CHEBI:30616"/>
        <dbReference type="ChEBI" id="CHEBI:57865"/>
        <dbReference type="ChEBI" id="CHEBI:58223"/>
        <dbReference type="ChEBI" id="CHEBI:456216"/>
        <dbReference type="EC" id="2.7.4.22"/>
    </reaction>
</comment>
<comment type="activity regulation">
    <text evidence="1">Inhibited by UTP.</text>
</comment>
<comment type="pathway">
    <text evidence="1">Pyrimidine metabolism; CTP biosynthesis via de novo pathway; UDP from UMP (UMPK route): step 1/1.</text>
</comment>
<comment type="subunit">
    <text evidence="1">Homohexamer.</text>
</comment>
<comment type="subcellular location">
    <subcellularLocation>
        <location evidence="1">Cytoplasm</location>
    </subcellularLocation>
</comment>
<comment type="similarity">
    <text evidence="1">Belongs to the UMP kinase family.</text>
</comment>
<keyword id="KW-0067">ATP-binding</keyword>
<keyword id="KW-0963">Cytoplasm</keyword>
<keyword id="KW-0418">Kinase</keyword>
<keyword id="KW-0547">Nucleotide-binding</keyword>
<keyword id="KW-0665">Pyrimidine biosynthesis</keyword>
<keyword id="KW-0808">Transferase</keyword>
<proteinExistence type="inferred from homology"/>
<name>PYRH_PHOV8</name>
<dbReference type="EC" id="2.7.4.22" evidence="1"/>
<dbReference type="EMBL" id="CP000139">
    <property type="protein sequence ID" value="ABR39548.1"/>
    <property type="molecule type" value="Genomic_DNA"/>
</dbReference>
<dbReference type="RefSeq" id="WP_005839859.1">
    <property type="nucleotide sequence ID" value="NZ_JANSWM010000118.1"/>
</dbReference>
<dbReference type="SMR" id="A6L1I4"/>
<dbReference type="STRING" id="435590.BVU_1873"/>
<dbReference type="PaxDb" id="435590-BVU_1873"/>
<dbReference type="GeneID" id="93445647"/>
<dbReference type="KEGG" id="bvu:BVU_1873"/>
<dbReference type="eggNOG" id="COG0528">
    <property type="taxonomic scope" value="Bacteria"/>
</dbReference>
<dbReference type="HOGENOM" id="CLU_033861_0_0_10"/>
<dbReference type="BioCyc" id="BVUL435590:G1G59-1962-MONOMER"/>
<dbReference type="UniPathway" id="UPA00159">
    <property type="reaction ID" value="UER00275"/>
</dbReference>
<dbReference type="Proteomes" id="UP000002861">
    <property type="component" value="Chromosome"/>
</dbReference>
<dbReference type="GO" id="GO:0005737">
    <property type="term" value="C:cytoplasm"/>
    <property type="evidence" value="ECO:0007669"/>
    <property type="project" value="UniProtKB-SubCell"/>
</dbReference>
<dbReference type="GO" id="GO:0005524">
    <property type="term" value="F:ATP binding"/>
    <property type="evidence" value="ECO:0007669"/>
    <property type="project" value="UniProtKB-KW"/>
</dbReference>
<dbReference type="GO" id="GO:0033862">
    <property type="term" value="F:UMP kinase activity"/>
    <property type="evidence" value="ECO:0007669"/>
    <property type="project" value="UniProtKB-EC"/>
</dbReference>
<dbReference type="GO" id="GO:0044210">
    <property type="term" value="P:'de novo' CTP biosynthetic process"/>
    <property type="evidence" value="ECO:0007669"/>
    <property type="project" value="UniProtKB-UniRule"/>
</dbReference>
<dbReference type="GO" id="GO:0006225">
    <property type="term" value="P:UDP biosynthetic process"/>
    <property type="evidence" value="ECO:0007669"/>
    <property type="project" value="TreeGrafter"/>
</dbReference>
<dbReference type="CDD" id="cd04254">
    <property type="entry name" value="AAK_UMPK-PyrH-Ec"/>
    <property type="match status" value="1"/>
</dbReference>
<dbReference type="FunFam" id="3.40.1160.10:FF:000001">
    <property type="entry name" value="Uridylate kinase"/>
    <property type="match status" value="1"/>
</dbReference>
<dbReference type="Gene3D" id="3.40.1160.10">
    <property type="entry name" value="Acetylglutamate kinase-like"/>
    <property type="match status" value="1"/>
</dbReference>
<dbReference type="HAMAP" id="MF_01220_B">
    <property type="entry name" value="PyrH_B"/>
    <property type="match status" value="1"/>
</dbReference>
<dbReference type="InterPro" id="IPR036393">
    <property type="entry name" value="AceGlu_kinase-like_sf"/>
</dbReference>
<dbReference type="InterPro" id="IPR001048">
    <property type="entry name" value="Asp/Glu/Uridylate_kinase"/>
</dbReference>
<dbReference type="InterPro" id="IPR011817">
    <property type="entry name" value="Uridylate_kinase"/>
</dbReference>
<dbReference type="InterPro" id="IPR015963">
    <property type="entry name" value="Uridylate_kinase_bac"/>
</dbReference>
<dbReference type="NCBIfam" id="TIGR02075">
    <property type="entry name" value="pyrH_bact"/>
    <property type="match status" value="1"/>
</dbReference>
<dbReference type="PANTHER" id="PTHR42833">
    <property type="entry name" value="URIDYLATE KINASE"/>
    <property type="match status" value="1"/>
</dbReference>
<dbReference type="PANTHER" id="PTHR42833:SF4">
    <property type="entry name" value="URIDYLATE KINASE PUMPKIN, CHLOROPLASTIC"/>
    <property type="match status" value="1"/>
</dbReference>
<dbReference type="Pfam" id="PF00696">
    <property type="entry name" value="AA_kinase"/>
    <property type="match status" value="1"/>
</dbReference>
<dbReference type="PIRSF" id="PIRSF005650">
    <property type="entry name" value="Uridylate_kin"/>
    <property type="match status" value="1"/>
</dbReference>
<dbReference type="SUPFAM" id="SSF53633">
    <property type="entry name" value="Carbamate kinase-like"/>
    <property type="match status" value="1"/>
</dbReference>